<dbReference type="EC" id="3.1.26.4" evidence="1"/>
<dbReference type="EMBL" id="BX640427">
    <property type="protein sequence ID" value="CAE36843.1"/>
    <property type="molecule type" value="Genomic_DNA"/>
</dbReference>
<dbReference type="RefSeq" id="WP_003811770.1">
    <property type="nucleotide sequence ID" value="NC_002928.3"/>
</dbReference>
<dbReference type="SMR" id="Q7WA46"/>
<dbReference type="GeneID" id="69601344"/>
<dbReference type="GeneID" id="93203300"/>
<dbReference type="KEGG" id="bpa:BPP1541"/>
<dbReference type="HOGENOM" id="CLU_036532_3_2_4"/>
<dbReference type="Proteomes" id="UP000001421">
    <property type="component" value="Chromosome"/>
</dbReference>
<dbReference type="GO" id="GO:0005737">
    <property type="term" value="C:cytoplasm"/>
    <property type="evidence" value="ECO:0007669"/>
    <property type="project" value="UniProtKB-SubCell"/>
</dbReference>
<dbReference type="GO" id="GO:0032299">
    <property type="term" value="C:ribonuclease H2 complex"/>
    <property type="evidence" value="ECO:0007669"/>
    <property type="project" value="TreeGrafter"/>
</dbReference>
<dbReference type="GO" id="GO:0030145">
    <property type="term" value="F:manganese ion binding"/>
    <property type="evidence" value="ECO:0007669"/>
    <property type="project" value="UniProtKB-UniRule"/>
</dbReference>
<dbReference type="GO" id="GO:0003723">
    <property type="term" value="F:RNA binding"/>
    <property type="evidence" value="ECO:0007669"/>
    <property type="project" value="InterPro"/>
</dbReference>
<dbReference type="GO" id="GO:0004523">
    <property type="term" value="F:RNA-DNA hybrid ribonuclease activity"/>
    <property type="evidence" value="ECO:0007669"/>
    <property type="project" value="UniProtKB-UniRule"/>
</dbReference>
<dbReference type="GO" id="GO:0043137">
    <property type="term" value="P:DNA replication, removal of RNA primer"/>
    <property type="evidence" value="ECO:0007669"/>
    <property type="project" value="TreeGrafter"/>
</dbReference>
<dbReference type="GO" id="GO:0006298">
    <property type="term" value="P:mismatch repair"/>
    <property type="evidence" value="ECO:0007669"/>
    <property type="project" value="TreeGrafter"/>
</dbReference>
<dbReference type="CDD" id="cd07182">
    <property type="entry name" value="RNase_HII_bacteria_HII_like"/>
    <property type="match status" value="1"/>
</dbReference>
<dbReference type="FunFam" id="3.30.420.10:FF:000006">
    <property type="entry name" value="Ribonuclease HII"/>
    <property type="match status" value="1"/>
</dbReference>
<dbReference type="Gene3D" id="3.30.420.10">
    <property type="entry name" value="Ribonuclease H-like superfamily/Ribonuclease H"/>
    <property type="match status" value="1"/>
</dbReference>
<dbReference type="HAMAP" id="MF_00052_B">
    <property type="entry name" value="RNase_HII_B"/>
    <property type="match status" value="1"/>
</dbReference>
<dbReference type="InterPro" id="IPR022898">
    <property type="entry name" value="RNase_HII"/>
</dbReference>
<dbReference type="InterPro" id="IPR001352">
    <property type="entry name" value="RNase_HII/HIII"/>
</dbReference>
<dbReference type="InterPro" id="IPR024567">
    <property type="entry name" value="RNase_HII/HIII_dom"/>
</dbReference>
<dbReference type="InterPro" id="IPR012337">
    <property type="entry name" value="RNaseH-like_sf"/>
</dbReference>
<dbReference type="InterPro" id="IPR036397">
    <property type="entry name" value="RNaseH_sf"/>
</dbReference>
<dbReference type="NCBIfam" id="NF000595">
    <property type="entry name" value="PRK00015.1-3"/>
    <property type="match status" value="1"/>
</dbReference>
<dbReference type="NCBIfam" id="NF000596">
    <property type="entry name" value="PRK00015.1-4"/>
    <property type="match status" value="1"/>
</dbReference>
<dbReference type="PANTHER" id="PTHR10954">
    <property type="entry name" value="RIBONUCLEASE H2 SUBUNIT A"/>
    <property type="match status" value="1"/>
</dbReference>
<dbReference type="PANTHER" id="PTHR10954:SF18">
    <property type="entry name" value="RIBONUCLEASE HII"/>
    <property type="match status" value="1"/>
</dbReference>
<dbReference type="Pfam" id="PF01351">
    <property type="entry name" value="RNase_HII"/>
    <property type="match status" value="1"/>
</dbReference>
<dbReference type="SUPFAM" id="SSF53098">
    <property type="entry name" value="Ribonuclease H-like"/>
    <property type="match status" value="1"/>
</dbReference>
<dbReference type="PROSITE" id="PS51975">
    <property type="entry name" value="RNASE_H_2"/>
    <property type="match status" value="1"/>
</dbReference>
<keyword id="KW-0963">Cytoplasm</keyword>
<keyword id="KW-0255">Endonuclease</keyword>
<keyword id="KW-0378">Hydrolase</keyword>
<keyword id="KW-0464">Manganese</keyword>
<keyword id="KW-0479">Metal-binding</keyword>
<keyword id="KW-0540">Nuclease</keyword>
<gene>
    <name evidence="1" type="primary">rnhB</name>
    <name type="ordered locus">BPP1541</name>
</gene>
<proteinExistence type="inferred from homology"/>
<feature type="chain" id="PRO_0000111547" description="Ribonuclease HII">
    <location>
        <begin position="1"/>
        <end position="201"/>
    </location>
</feature>
<feature type="domain" description="RNase H type-2" evidence="2">
    <location>
        <begin position="15"/>
        <end position="201"/>
    </location>
</feature>
<feature type="binding site" evidence="1">
    <location>
        <position position="21"/>
    </location>
    <ligand>
        <name>a divalent metal cation</name>
        <dbReference type="ChEBI" id="CHEBI:60240"/>
    </ligand>
</feature>
<feature type="binding site" evidence="1">
    <location>
        <position position="22"/>
    </location>
    <ligand>
        <name>a divalent metal cation</name>
        <dbReference type="ChEBI" id="CHEBI:60240"/>
    </ligand>
</feature>
<feature type="binding site" evidence="1">
    <location>
        <position position="113"/>
    </location>
    <ligand>
        <name>a divalent metal cation</name>
        <dbReference type="ChEBI" id="CHEBI:60240"/>
    </ligand>
</feature>
<reference key="1">
    <citation type="journal article" date="2003" name="Nat. Genet.">
        <title>Comparative analysis of the genome sequences of Bordetella pertussis, Bordetella parapertussis and Bordetella bronchiseptica.</title>
        <authorList>
            <person name="Parkhill J."/>
            <person name="Sebaihia M."/>
            <person name="Preston A."/>
            <person name="Murphy L.D."/>
            <person name="Thomson N.R."/>
            <person name="Harris D.E."/>
            <person name="Holden M.T.G."/>
            <person name="Churcher C.M."/>
            <person name="Bentley S.D."/>
            <person name="Mungall K.L."/>
            <person name="Cerdeno-Tarraga A.-M."/>
            <person name="Temple L."/>
            <person name="James K.D."/>
            <person name="Harris B."/>
            <person name="Quail M.A."/>
            <person name="Achtman M."/>
            <person name="Atkin R."/>
            <person name="Baker S."/>
            <person name="Basham D."/>
            <person name="Bason N."/>
            <person name="Cherevach I."/>
            <person name="Chillingworth T."/>
            <person name="Collins M."/>
            <person name="Cronin A."/>
            <person name="Davis P."/>
            <person name="Doggett J."/>
            <person name="Feltwell T."/>
            <person name="Goble A."/>
            <person name="Hamlin N."/>
            <person name="Hauser H."/>
            <person name="Holroyd S."/>
            <person name="Jagels K."/>
            <person name="Leather S."/>
            <person name="Moule S."/>
            <person name="Norberczak H."/>
            <person name="O'Neil S."/>
            <person name="Ormond D."/>
            <person name="Price C."/>
            <person name="Rabbinowitsch E."/>
            <person name="Rutter S."/>
            <person name="Sanders M."/>
            <person name="Saunders D."/>
            <person name="Seeger K."/>
            <person name="Sharp S."/>
            <person name="Simmonds M."/>
            <person name="Skelton J."/>
            <person name="Squares R."/>
            <person name="Squares S."/>
            <person name="Stevens K."/>
            <person name="Unwin L."/>
            <person name="Whitehead S."/>
            <person name="Barrell B.G."/>
            <person name="Maskell D.J."/>
        </authorList>
    </citation>
    <scope>NUCLEOTIDE SEQUENCE [LARGE SCALE GENOMIC DNA]</scope>
    <source>
        <strain>12822 / ATCC BAA-587 / NCTC 13253</strain>
    </source>
</reference>
<comment type="function">
    <text evidence="1">Endonuclease that specifically degrades the RNA of RNA-DNA hybrids.</text>
</comment>
<comment type="catalytic activity">
    <reaction evidence="1">
        <text>Endonucleolytic cleavage to 5'-phosphomonoester.</text>
        <dbReference type="EC" id="3.1.26.4"/>
    </reaction>
</comment>
<comment type="cofactor">
    <cofactor evidence="1">
        <name>Mn(2+)</name>
        <dbReference type="ChEBI" id="CHEBI:29035"/>
    </cofactor>
    <cofactor evidence="1">
        <name>Mg(2+)</name>
        <dbReference type="ChEBI" id="CHEBI:18420"/>
    </cofactor>
    <text evidence="1">Manganese or magnesium. Binds 1 divalent metal ion per monomer in the absence of substrate. May bind a second metal ion after substrate binding.</text>
</comment>
<comment type="subcellular location">
    <subcellularLocation>
        <location evidence="1">Cytoplasm</location>
    </subcellularLocation>
</comment>
<comment type="similarity">
    <text evidence="1">Belongs to the RNase HII family.</text>
</comment>
<organism>
    <name type="scientific">Bordetella parapertussis (strain 12822 / ATCC BAA-587 / NCTC 13253)</name>
    <dbReference type="NCBI Taxonomy" id="257311"/>
    <lineage>
        <taxon>Bacteria</taxon>
        <taxon>Pseudomonadati</taxon>
        <taxon>Pseudomonadota</taxon>
        <taxon>Betaproteobacteria</taxon>
        <taxon>Burkholderiales</taxon>
        <taxon>Alcaligenaceae</taxon>
        <taxon>Bordetella</taxon>
    </lineage>
</organism>
<accession>Q7WA46</accession>
<evidence type="ECO:0000255" key="1">
    <source>
        <dbReference type="HAMAP-Rule" id="MF_00052"/>
    </source>
</evidence>
<evidence type="ECO:0000255" key="2">
    <source>
        <dbReference type="PROSITE-ProRule" id="PRU01319"/>
    </source>
</evidence>
<name>RNH2_BORPA</name>
<sequence>MEQPDLFGTLAPLPAIIAGVDEAGRGPLAGAVYAAAVILDPDRPVDGLADSKVLKAEQREALAVQIRAQALAWFVASASVQEIDSLNILRATMLAMQRAVAGLAMAPELAMVDGNQAPKLRCAVQTVIKGDALVPAISAASILAKTARDADLLRLHALYPQYGFDQHKGYGTPQHLSLLREHGPCPEHRRSFAPIKAYGAP</sequence>
<protein>
    <recommendedName>
        <fullName evidence="1">Ribonuclease HII</fullName>
        <shortName evidence="1">RNase HII</shortName>
        <ecNumber evidence="1">3.1.26.4</ecNumber>
    </recommendedName>
</protein>